<reference key="1">
    <citation type="submission" date="2008-05" db="EMBL/GenBank/DDBJ databases">
        <title>Complete sequence of Shigella boydii serotype 18 strain BS512.</title>
        <authorList>
            <person name="Rasko D.A."/>
            <person name="Rosovitz M."/>
            <person name="Maurelli A.T."/>
            <person name="Myers G."/>
            <person name="Seshadri R."/>
            <person name="Cer R."/>
            <person name="Jiang L."/>
            <person name="Ravel J."/>
            <person name="Sebastian Y."/>
        </authorList>
    </citation>
    <scope>NUCLEOTIDE SEQUENCE [LARGE SCALE GENOMIC DNA]</scope>
    <source>
        <strain>CDC 3083-94 / BS512</strain>
    </source>
</reference>
<comment type="function">
    <text evidence="1">Nitric oxide-sensitive repressor of genes involved in protecting the cell against nitrosative stress. May require iron for activity.</text>
</comment>
<comment type="cofactor">
    <cofactor evidence="1">
        <name>[2Fe-2S] cluster</name>
        <dbReference type="ChEBI" id="CHEBI:190135"/>
    </cofactor>
    <text evidence="1">Binds 1 [2Fe-2S] cluster per subunit.</text>
</comment>
<evidence type="ECO:0000255" key="1">
    <source>
        <dbReference type="HAMAP-Rule" id="MF_01177"/>
    </source>
</evidence>
<dbReference type="EMBL" id="CP001063">
    <property type="protein sequence ID" value="ACD07812.1"/>
    <property type="molecule type" value="Genomic_DNA"/>
</dbReference>
<dbReference type="RefSeq" id="WP_001177606.1">
    <property type="nucleotide sequence ID" value="NC_010658.1"/>
</dbReference>
<dbReference type="SMR" id="B2TY53"/>
<dbReference type="STRING" id="344609.SbBS512_E4709"/>
<dbReference type="KEGG" id="sbc:SbBS512_E4709"/>
<dbReference type="HOGENOM" id="CLU_107144_2_1_6"/>
<dbReference type="Proteomes" id="UP000001030">
    <property type="component" value="Chromosome"/>
</dbReference>
<dbReference type="GO" id="GO:0005829">
    <property type="term" value="C:cytosol"/>
    <property type="evidence" value="ECO:0007669"/>
    <property type="project" value="TreeGrafter"/>
</dbReference>
<dbReference type="GO" id="GO:0051537">
    <property type="term" value="F:2 iron, 2 sulfur cluster binding"/>
    <property type="evidence" value="ECO:0007669"/>
    <property type="project" value="UniProtKB-KW"/>
</dbReference>
<dbReference type="GO" id="GO:0003700">
    <property type="term" value="F:DNA-binding transcription factor activity"/>
    <property type="evidence" value="ECO:0007669"/>
    <property type="project" value="UniProtKB-UniRule"/>
</dbReference>
<dbReference type="GO" id="GO:0003690">
    <property type="term" value="F:double-stranded DNA binding"/>
    <property type="evidence" value="ECO:0007669"/>
    <property type="project" value="UniProtKB-UniRule"/>
</dbReference>
<dbReference type="GO" id="GO:0005506">
    <property type="term" value="F:iron ion binding"/>
    <property type="evidence" value="ECO:0007669"/>
    <property type="project" value="UniProtKB-UniRule"/>
</dbReference>
<dbReference type="GO" id="GO:0045892">
    <property type="term" value="P:negative regulation of DNA-templated transcription"/>
    <property type="evidence" value="ECO:0007669"/>
    <property type="project" value="InterPro"/>
</dbReference>
<dbReference type="FunFam" id="1.10.10.10:FF:000105">
    <property type="entry name" value="HTH-type transcriptional repressor NsrR"/>
    <property type="match status" value="1"/>
</dbReference>
<dbReference type="Gene3D" id="1.10.10.10">
    <property type="entry name" value="Winged helix-like DNA-binding domain superfamily/Winged helix DNA-binding domain"/>
    <property type="match status" value="1"/>
</dbReference>
<dbReference type="HAMAP" id="MF_01177">
    <property type="entry name" value="HTH_type_NsrR"/>
    <property type="match status" value="1"/>
</dbReference>
<dbReference type="InterPro" id="IPR030489">
    <property type="entry name" value="TR_Rrf2-type_CS"/>
</dbReference>
<dbReference type="InterPro" id="IPR000944">
    <property type="entry name" value="Tscrpt_reg_Rrf2"/>
</dbReference>
<dbReference type="InterPro" id="IPR023761">
    <property type="entry name" value="Tscrpt_rep_HTH_NsrR"/>
</dbReference>
<dbReference type="InterPro" id="IPR036388">
    <property type="entry name" value="WH-like_DNA-bd_sf"/>
</dbReference>
<dbReference type="InterPro" id="IPR036390">
    <property type="entry name" value="WH_DNA-bd_sf"/>
</dbReference>
<dbReference type="NCBIfam" id="NF008240">
    <property type="entry name" value="PRK11014.1"/>
    <property type="match status" value="1"/>
</dbReference>
<dbReference type="NCBIfam" id="TIGR00738">
    <property type="entry name" value="rrf2_super"/>
    <property type="match status" value="1"/>
</dbReference>
<dbReference type="PANTHER" id="PTHR33221:SF4">
    <property type="entry name" value="HTH-TYPE TRANSCRIPTIONAL REPRESSOR NSRR"/>
    <property type="match status" value="1"/>
</dbReference>
<dbReference type="PANTHER" id="PTHR33221">
    <property type="entry name" value="WINGED HELIX-TURN-HELIX TRANSCRIPTIONAL REGULATOR, RRF2 FAMILY"/>
    <property type="match status" value="1"/>
</dbReference>
<dbReference type="Pfam" id="PF02082">
    <property type="entry name" value="Rrf2"/>
    <property type="match status" value="1"/>
</dbReference>
<dbReference type="SUPFAM" id="SSF46785">
    <property type="entry name" value="Winged helix' DNA-binding domain"/>
    <property type="match status" value="1"/>
</dbReference>
<dbReference type="PROSITE" id="PS01332">
    <property type="entry name" value="HTH_RRF2_1"/>
    <property type="match status" value="1"/>
</dbReference>
<dbReference type="PROSITE" id="PS51197">
    <property type="entry name" value="HTH_RRF2_2"/>
    <property type="match status" value="1"/>
</dbReference>
<sequence>MQLTNFTDYGLRALIYMASLPEGRMTSISEVTDVYGVSRNHMVKIINQLSRAGYVTAVRGKNGGIRLGKPASAIRIGDVVRELEPLSLVNCSSEFCHITPACRLKQALSKAVQSFLTELDNYTLADLVEENQPLYKLLLVE</sequence>
<keyword id="KW-0001">2Fe-2S</keyword>
<keyword id="KW-0238">DNA-binding</keyword>
<keyword id="KW-0408">Iron</keyword>
<keyword id="KW-0411">Iron-sulfur</keyword>
<keyword id="KW-0479">Metal-binding</keyword>
<keyword id="KW-1185">Reference proteome</keyword>
<keyword id="KW-0678">Repressor</keyword>
<keyword id="KW-0804">Transcription</keyword>
<keyword id="KW-0805">Transcription regulation</keyword>
<accession>B2TY53</accession>
<name>NSRR_SHIB3</name>
<proteinExistence type="inferred from homology"/>
<gene>
    <name evidence="1" type="primary">nsrR</name>
    <name type="ordered locus">SbBS512_E4709</name>
</gene>
<protein>
    <recommendedName>
        <fullName evidence="1">HTH-type transcriptional repressor NsrR</fullName>
    </recommendedName>
</protein>
<organism>
    <name type="scientific">Shigella boydii serotype 18 (strain CDC 3083-94 / BS512)</name>
    <dbReference type="NCBI Taxonomy" id="344609"/>
    <lineage>
        <taxon>Bacteria</taxon>
        <taxon>Pseudomonadati</taxon>
        <taxon>Pseudomonadota</taxon>
        <taxon>Gammaproteobacteria</taxon>
        <taxon>Enterobacterales</taxon>
        <taxon>Enterobacteriaceae</taxon>
        <taxon>Shigella</taxon>
    </lineage>
</organism>
<feature type="chain" id="PRO_1000138132" description="HTH-type transcriptional repressor NsrR">
    <location>
        <begin position="1"/>
        <end position="141"/>
    </location>
</feature>
<feature type="domain" description="HTH rrf2-type" evidence="1">
    <location>
        <begin position="2"/>
        <end position="129"/>
    </location>
</feature>
<feature type="DNA-binding region" description="H-T-H motif" evidence="1">
    <location>
        <begin position="28"/>
        <end position="51"/>
    </location>
</feature>
<feature type="binding site" evidence="1">
    <location>
        <position position="91"/>
    </location>
    <ligand>
        <name>[2Fe-2S] cluster</name>
        <dbReference type="ChEBI" id="CHEBI:190135"/>
    </ligand>
</feature>
<feature type="binding site" evidence="1">
    <location>
        <position position="96"/>
    </location>
    <ligand>
        <name>[2Fe-2S] cluster</name>
        <dbReference type="ChEBI" id="CHEBI:190135"/>
    </ligand>
</feature>
<feature type="binding site" evidence="1">
    <location>
        <position position="102"/>
    </location>
    <ligand>
        <name>[2Fe-2S] cluster</name>
        <dbReference type="ChEBI" id="CHEBI:190135"/>
    </ligand>
</feature>